<sequence length="510" mass="55711">MVTIRADEISKIIRERIEQYNTEVKIVNTGTVLQVGDGIARIYGLDEVMAGELVEFEEGTIGIALNLESKNVGVVLMGDGLMIQEGSSVKATGRIAQIPVSEAYLSRVINALAKPIDGRGEILASESRLIESPAPGIISRRSVYEPLQTGLIAIDSMIPIGRGQRELIIGDRQTGKTAVATDTILNQQGQNVICVYVAVGQKASSVAQVVTTLQERGAMEYTIVVAETADSPATLQYLAPYTGAALAEYFMYRERHTLIIYDDLSKQAQAYRQMSLLLRRPPGREAYPGDVFYLHSRLLERAAKLSSQLGEGSMTALPIVETQSGDVSAYIPTNVISITDGQIFLSADLFNAGIRPAINVGISVSRVGSAAQIKAMKQVAGKLKLELAQFAELEAFAQFASDLDKATQNQLARGQRLRELLKQSQSAPLTVEEQIVTIYTGTNGYLDSLEIGQVRKFLVELRAYLKTNKPQFKEIISSTNTLTGEAEALLKDAIKEQMELFLFQEQVEKN</sequence>
<gene>
    <name evidence="1" type="primary">atpA</name>
</gene>
<reference key="1">
    <citation type="journal article" date="2007" name="BMC Genomics">
        <title>Rapid evolutionary change of common bean (Phaseolus vulgaris L) plastome, and the genomic diversification of legume chloroplasts.</title>
        <authorList>
            <person name="Guo X."/>
            <person name="Castillo-Ramirez S."/>
            <person name="Gonzalez V."/>
            <person name="Bustos P."/>
            <person name="Fernandez-Vazquez J.L."/>
            <person name="Santamaria R.I."/>
            <person name="Arellano J."/>
            <person name="Cevallos M.A."/>
            <person name="Davila G."/>
        </authorList>
    </citation>
    <scope>NUCLEOTIDE SEQUENCE [LARGE SCALE GENOMIC DNA]</scope>
    <source>
        <strain>cv. Negro Jamapa</strain>
    </source>
</reference>
<reference key="2">
    <citation type="submission" date="2007-10" db="EMBL/GenBank/DDBJ databases">
        <title>Complete nucleotide sequence of the plastid genome of the common bean, Phaseolus vulgaris.</title>
        <authorList>
            <person name="Moore M.J."/>
            <person name="Triplett E.W."/>
            <person name="Broughton W.J."/>
            <person name="Soltis P.S."/>
            <person name="Soltis D.E."/>
        </authorList>
    </citation>
    <scope>NUCLEOTIDE SEQUENCE [LARGE SCALE GENOMIC DNA]</scope>
</reference>
<name>ATPA_PHAVU</name>
<proteinExistence type="inferred from homology"/>
<accession>A4GGB2</accession>
<organism>
    <name type="scientific">Phaseolus vulgaris</name>
    <name type="common">Kidney bean</name>
    <name type="synonym">French bean</name>
    <dbReference type="NCBI Taxonomy" id="3885"/>
    <lineage>
        <taxon>Eukaryota</taxon>
        <taxon>Viridiplantae</taxon>
        <taxon>Streptophyta</taxon>
        <taxon>Embryophyta</taxon>
        <taxon>Tracheophyta</taxon>
        <taxon>Spermatophyta</taxon>
        <taxon>Magnoliopsida</taxon>
        <taxon>eudicotyledons</taxon>
        <taxon>Gunneridae</taxon>
        <taxon>Pentapetalae</taxon>
        <taxon>rosids</taxon>
        <taxon>fabids</taxon>
        <taxon>Fabales</taxon>
        <taxon>Fabaceae</taxon>
        <taxon>Papilionoideae</taxon>
        <taxon>50 kb inversion clade</taxon>
        <taxon>NPAAA clade</taxon>
        <taxon>indigoferoid/millettioid clade</taxon>
        <taxon>Phaseoleae</taxon>
        <taxon>Phaseolus</taxon>
    </lineage>
</organism>
<feature type="chain" id="PRO_0000339105" description="ATP synthase subunit alpha, chloroplastic">
    <location>
        <begin position="1"/>
        <end position="510"/>
    </location>
</feature>
<feature type="binding site" evidence="1">
    <location>
        <begin position="170"/>
        <end position="177"/>
    </location>
    <ligand>
        <name>ATP</name>
        <dbReference type="ChEBI" id="CHEBI:30616"/>
    </ligand>
</feature>
<feature type="site" description="Required for activity" evidence="1">
    <location>
        <position position="363"/>
    </location>
</feature>
<keyword id="KW-0066">ATP synthesis</keyword>
<keyword id="KW-0067">ATP-binding</keyword>
<keyword id="KW-0139">CF(1)</keyword>
<keyword id="KW-0150">Chloroplast</keyword>
<keyword id="KW-0375">Hydrogen ion transport</keyword>
<keyword id="KW-0406">Ion transport</keyword>
<keyword id="KW-0472">Membrane</keyword>
<keyword id="KW-0547">Nucleotide-binding</keyword>
<keyword id="KW-0934">Plastid</keyword>
<keyword id="KW-0793">Thylakoid</keyword>
<keyword id="KW-1278">Translocase</keyword>
<keyword id="KW-0813">Transport</keyword>
<evidence type="ECO:0000255" key="1">
    <source>
        <dbReference type="HAMAP-Rule" id="MF_01346"/>
    </source>
</evidence>
<comment type="function">
    <text evidence="1">Produces ATP from ADP in the presence of a proton gradient across the membrane. The alpha chain is a regulatory subunit.</text>
</comment>
<comment type="catalytic activity">
    <reaction evidence="1">
        <text>ATP + H2O + 4 H(+)(in) = ADP + phosphate + 5 H(+)(out)</text>
        <dbReference type="Rhea" id="RHEA:57720"/>
        <dbReference type="ChEBI" id="CHEBI:15377"/>
        <dbReference type="ChEBI" id="CHEBI:15378"/>
        <dbReference type="ChEBI" id="CHEBI:30616"/>
        <dbReference type="ChEBI" id="CHEBI:43474"/>
        <dbReference type="ChEBI" id="CHEBI:456216"/>
        <dbReference type="EC" id="7.1.2.2"/>
    </reaction>
</comment>
<comment type="subunit">
    <text evidence="1">F-type ATPases have 2 components, CF(1) - the catalytic core - and CF(0) - the membrane proton channel. CF(1) has five subunits: alpha(3), beta(3), gamma(1), delta(1), epsilon(1). CF(0) has four main subunits: a, b, b' and c.</text>
</comment>
<comment type="subcellular location">
    <subcellularLocation>
        <location evidence="1">Plastid</location>
        <location evidence="1">Chloroplast thylakoid membrane</location>
        <topology evidence="1">Peripheral membrane protein</topology>
    </subcellularLocation>
</comment>
<comment type="similarity">
    <text evidence="1">Belongs to the ATPase alpha/beta chains family.</text>
</comment>
<dbReference type="EC" id="7.1.2.2" evidence="1"/>
<dbReference type="EMBL" id="DQ886273">
    <property type="protein sequence ID" value="ABH88093.1"/>
    <property type="molecule type" value="Genomic_DNA"/>
</dbReference>
<dbReference type="EMBL" id="EU196765">
    <property type="protein sequence ID" value="ABW22775.1"/>
    <property type="molecule type" value="Genomic_DNA"/>
</dbReference>
<dbReference type="RefSeq" id="YP_001122813.1">
    <property type="nucleotide sequence ID" value="NC_009259.1"/>
</dbReference>
<dbReference type="SMR" id="A4GGB2"/>
<dbReference type="GeneID" id="4961755"/>
<dbReference type="KEGG" id="pvu:4961755"/>
<dbReference type="PhylomeDB" id="A4GGB2"/>
<dbReference type="GO" id="GO:0009535">
    <property type="term" value="C:chloroplast thylakoid membrane"/>
    <property type="evidence" value="ECO:0007669"/>
    <property type="project" value="UniProtKB-SubCell"/>
</dbReference>
<dbReference type="GO" id="GO:0045259">
    <property type="term" value="C:proton-transporting ATP synthase complex"/>
    <property type="evidence" value="ECO:0007669"/>
    <property type="project" value="UniProtKB-KW"/>
</dbReference>
<dbReference type="GO" id="GO:0043531">
    <property type="term" value="F:ADP binding"/>
    <property type="evidence" value="ECO:0007669"/>
    <property type="project" value="TreeGrafter"/>
</dbReference>
<dbReference type="GO" id="GO:0005524">
    <property type="term" value="F:ATP binding"/>
    <property type="evidence" value="ECO:0007669"/>
    <property type="project" value="UniProtKB-UniRule"/>
</dbReference>
<dbReference type="GO" id="GO:0046933">
    <property type="term" value="F:proton-transporting ATP synthase activity, rotational mechanism"/>
    <property type="evidence" value="ECO:0007669"/>
    <property type="project" value="UniProtKB-UniRule"/>
</dbReference>
<dbReference type="CDD" id="cd18113">
    <property type="entry name" value="ATP-synt_F1_alpha_C"/>
    <property type="match status" value="1"/>
</dbReference>
<dbReference type="CDD" id="cd18116">
    <property type="entry name" value="ATP-synt_F1_alpha_N"/>
    <property type="match status" value="1"/>
</dbReference>
<dbReference type="CDD" id="cd01132">
    <property type="entry name" value="F1-ATPase_alpha_CD"/>
    <property type="match status" value="1"/>
</dbReference>
<dbReference type="FunFam" id="1.20.150.20:FF:000001">
    <property type="entry name" value="ATP synthase subunit alpha"/>
    <property type="match status" value="1"/>
</dbReference>
<dbReference type="FunFam" id="2.40.30.20:FF:000001">
    <property type="entry name" value="ATP synthase subunit alpha"/>
    <property type="match status" value="1"/>
</dbReference>
<dbReference type="FunFam" id="3.40.50.300:FF:000002">
    <property type="entry name" value="ATP synthase subunit alpha"/>
    <property type="match status" value="1"/>
</dbReference>
<dbReference type="Gene3D" id="2.40.30.20">
    <property type="match status" value="1"/>
</dbReference>
<dbReference type="Gene3D" id="1.20.150.20">
    <property type="entry name" value="ATP synthase alpha/beta chain, C-terminal domain"/>
    <property type="match status" value="1"/>
</dbReference>
<dbReference type="Gene3D" id="3.40.50.300">
    <property type="entry name" value="P-loop containing nucleotide triphosphate hydrolases"/>
    <property type="match status" value="1"/>
</dbReference>
<dbReference type="HAMAP" id="MF_01346">
    <property type="entry name" value="ATP_synth_alpha_bact"/>
    <property type="match status" value="1"/>
</dbReference>
<dbReference type="InterPro" id="IPR023366">
    <property type="entry name" value="ATP_synth_asu-like_sf"/>
</dbReference>
<dbReference type="InterPro" id="IPR000793">
    <property type="entry name" value="ATP_synth_asu_C"/>
</dbReference>
<dbReference type="InterPro" id="IPR038376">
    <property type="entry name" value="ATP_synth_asu_C_sf"/>
</dbReference>
<dbReference type="InterPro" id="IPR033732">
    <property type="entry name" value="ATP_synth_F1_a_nt-bd_dom"/>
</dbReference>
<dbReference type="InterPro" id="IPR005294">
    <property type="entry name" value="ATP_synth_F1_asu"/>
</dbReference>
<dbReference type="InterPro" id="IPR020003">
    <property type="entry name" value="ATPase_a/bsu_AS"/>
</dbReference>
<dbReference type="InterPro" id="IPR004100">
    <property type="entry name" value="ATPase_F1/V1/A1_a/bsu_N"/>
</dbReference>
<dbReference type="InterPro" id="IPR036121">
    <property type="entry name" value="ATPase_F1/V1/A1_a/bsu_N_sf"/>
</dbReference>
<dbReference type="InterPro" id="IPR000194">
    <property type="entry name" value="ATPase_F1/V1/A1_a/bsu_nucl-bd"/>
</dbReference>
<dbReference type="InterPro" id="IPR027417">
    <property type="entry name" value="P-loop_NTPase"/>
</dbReference>
<dbReference type="NCBIfam" id="TIGR00962">
    <property type="entry name" value="atpA"/>
    <property type="match status" value="1"/>
</dbReference>
<dbReference type="NCBIfam" id="NF009884">
    <property type="entry name" value="PRK13343.1"/>
    <property type="match status" value="1"/>
</dbReference>
<dbReference type="PANTHER" id="PTHR48082">
    <property type="entry name" value="ATP SYNTHASE SUBUNIT ALPHA, MITOCHONDRIAL"/>
    <property type="match status" value="1"/>
</dbReference>
<dbReference type="PANTHER" id="PTHR48082:SF2">
    <property type="entry name" value="ATP SYNTHASE SUBUNIT ALPHA, MITOCHONDRIAL"/>
    <property type="match status" value="1"/>
</dbReference>
<dbReference type="Pfam" id="PF00006">
    <property type="entry name" value="ATP-synt_ab"/>
    <property type="match status" value="1"/>
</dbReference>
<dbReference type="Pfam" id="PF00306">
    <property type="entry name" value="ATP-synt_ab_C"/>
    <property type="match status" value="1"/>
</dbReference>
<dbReference type="Pfam" id="PF02874">
    <property type="entry name" value="ATP-synt_ab_N"/>
    <property type="match status" value="1"/>
</dbReference>
<dbReference type="PIRSF" id="PIRSF039088">
    <property type="entry name" value="F_ATPase_subunit_alpha"/>
    <property type="match status" value="1"/>
</dbReference>
<dbReference type="SUPFAM" id="SSF47917">
    <property type="entry name" value="C-terminal domain of alpha and beta subunits of F1 ATP synthase"/>
    <property type="match status" value="1"/>
</dbReference>
<dbReference type="SUPFAM" id="SSF50615">
    <property type="entry name" value="N-terminal domain of alpha and beta subunits of F1 ATP synthase"/>
    <property type="match status" value="1"/>
</dbReference>
<dbReference type="SUPFAM" id="SSF52540">
    <property type="entry name" value="P-loop containing nucleoside triphosphate hydrolases"/>
    <property type="match status" value="1"/>
</dbReference>
<dbReference type="PROSITE" id="PS00152">
    <property type="entry name" value="ATPASE_ALPHA_BETA"/>
    <property type="match status" value="1"/>
</dbReference>
<protein>
    <recommendedName>
        <fullName evidence="1">ATP synthase subunit alpha, chloroplastic</fullName>
        <ecNumber evidence="1">7.1.2.2</ecNumber>
    </recommendedName>
    <alternativeName>
        <fullName evidence="1">ATP synthase F1 sector subunit alpha</fullName>
    </alternativeName>
    <alternativeName>
        <fullName evidence="1">F-ATPase subunit alpha</fullName>
    </alternativeName>
</protein>
<geneLocation type="chloroplast"/>